<organism>
    <name type="scientific">Pinctada maxima</name>
    <name type="common">Silver-lipped pearl oyster</name>
    <name type="synonym">White-lipped pearl oyster</name>
    <dbReference type="NCBI Taxonomy" id="104660"/>
    <lineage>
        <taxon>Eukaryota</taxon>
        <taxon>Metazoa</taxon>
        <taxon>Spiralia</taxon>
        <taxon>Lophotrochozoa</taxon>
        <taxon>Mollusca</taxon>
        <taxon>Bivalvia</taxon>
        <taxon>Autobranchia</taxon>
        <taxon>Pteriomorphia</taxon>
        <taxon>Pterioida</taxon>
        <taxon>Pterioidea</taxon>
        <taxon>Pteriidae</taxon>
        <taxon>Pinctada</taxon>
    </lineage>
</organism>
<dbReference type="EMBL" id="GT277755">
    <property type="status" value="NOT_ANNOTATED_CDS"/>
    <property type="molecule type" value="mRNA"/>
</dbReference>
<dbReference type="EMBL" id="GT277821">
    <property type="status" value="NOT_ANNOTATED_CDS"/>
    <property type="molecule type" value="mRNA"/>
</dbReference>
<dbReference type="EMBL" id="GT278407">
    <property type="status" value="NOT_ANNOTATED_CDS"/>
    <property type="molecule type" value="mRNA"/>
</dbReference>
<dbReference type="EMBL" id="GT279048">
    <property type="status" value="NOT_ANNOTATED_CDS"/>
    <property type="molecule type" value="mRNA"/>
</dbReference>
<dbReference type="EMBL" id="GT279510">
    <property type="status" value="NOT_ANNOTATED_CDS"/>
    <property type="molecule type" value="mRNA"/>
</dbReference>
<dbReference type="EMBL" id="GT279654">
    <property type="status" value="NOT_ANNOTATED_CDS"/>
    <property type="molecule type" value="mRNA"/>
</dbReference>
<dbReference type="EMBL" id="GT279655">
    <property type="status" value="NOT_ANNOTATED_CDS"/>
    <property type="molecule type" value="mRNA"/>
</dbReference>
<dbReference type="EMBL" id="GT279783">
    <property type="status" value="NOT_ANNOTATED_CDS"/>
    <property type="molecule type" value="mRNA"/>
</dbReference>
<dbReference type="EMBL" id="GT281217">
    <property type="status" value="NOT_ANNOTATED_CDS"/>
    <property type="molecule type" value="mRNA"/>
</dbReference>
<dbReference type="EMBL" id="GT281270">
    <property type="status" value="NOT_ANNOTATED_CDS"/>
    <property type="molecule type" value="mRNA"/>
</dbReference>
<dbReference type="EMBL" id="GT281750">
    <property type="status" value="NOT_ANNOTATED_CDS"/>
    <property type="molecule type" value="mRNA"/>
</dbReference>
<dbReference type="EMBL" id="GT282426">
    <property type="status" value="NOT_ANNOTATED_CDS"/>
    <property type="molecule type" value="mRNA"/>
</dbReference>
<dbReference type="EMBL" id="GT282750">
    <property type="status" value="NOT_ANNOTATED_CDS"/>
    <property type="molecule type" value="mRNA"/>
</dbReference>
<dbReference type="EMBL" id="GT283077">
    <property type="status" value="NOT_ANNOTATED_CDS"/>
    <property type="molecule type" value="mRNA"/>
</dbReference>
<dbReference type="EMBL" id="GT283189">
    <property type="status" value="NOT_ANNOTATED_CDS"/>
    <property type="molecule type" value="mRNA"/>
</dbReference>
<dbReference type="EMBL" id="GT283412">
    <property type="status" value="NOT_ANNOTATED_CDS"/>
    <property type="molecule type" value="mRNA"/>
</dbReference>
<dbReference type="EMBL" id="GT283426">
    <property type="status" value="NOT_ANNOTATED_CDS"/>
    <property type="molecule type" value="mRNA"/>
</dbReference>
<dbReference type="EMBL" id="EZ420146">
    <property type="status" value="NOT_ANNOTATED_CDS"/>
    <property type="molecule type" value="mRNA"/>
</dbReference>
<dbReference type="GO" id="GO:0005576">
    <property type="term" value="C:extracellular region"/>
    <property type="evidence" value="ECO:0007669"/>
    <property type="project" value="UniProtKB-SubCell"/>
</dbReference>
<protein>
    <recommendedName>
        <fullName>Mantle protein</fullName>
        <shortName>MP</shortName>
    </recommendedName>
</protein>
<proteinExistence type="evidence at protein level"/>
<evidence type="ECO:0000255" key="1"/>
<evidence type="ECO:0000269" key="2">
    <source>
    </source>
</evidence>
<evidence type="ECO:0000269" key="3">
    <source>
    </source>
</evidence>
<evidence type="ECO:0000305" key="4"/>
<name>MP_PINMA</name>
<accession>P86948</accession>
<keyword id="KW-0903">Direct protein sequencing</keyword>
<keyword id="KW-0964">Secreted</keyword>
<keyword id="KW-0732">Signal</keyword>
<reference evidence="4" key="1">
    <citation type="journal article" date="2010" name="Mol. Biol. Evol.">
        <title>Parallel evolution of nacre building gene sets in molluscs.</title>
        <authorList>
            <person name="Jackson D.J."/>
            <person name="McDougall C."/>
            <person name="Woodcroft B."/>
            <person name="Moase P."/>
            <person name="Rose R.A."/>
            <person name="Kube M."/>
            <person name="Reinhardt R."/>
            <person name="Rokhsar D.S."/>
            <person name="Montagnani C."/>
            <person name="Joubert C."/>
            <person name="Piquemal D."/>
            <person name="Degnan B.M."/>
        </authorList>
    </citation>
    <scope>NUCLEOTIDE SEQUENCE [MRNA]</scope>
    <scope>IDENTIFICATION</scope>
    <source>
        <tissue evidence="2">Mantle</tissue>
    </source>
</reference>
<reference key="2">
    <citation type="journal article" date="2012" name="Proc. Natl. Acad. Sci. U.S.A.">
        <title>Different secretory repertoires control the biomineralization processes of prism and nacre deposition of the pearl oyster shell.</title>
        <authorList>
            <person name="Marie B."/>
            <person name="Joubert C."/>
            <person name="Tayale A."/>
            <person name="Zanella-Cleon I."/>
            <person name="Belliard C."/>
            <person name="Piquemal D."/>
            <person name="Cochennec-Laureau N."/>
            <person name="Marin F."/>
            <person name="Gueguen Y."/>
            <person name="Montagnani C."/>
        </authorList>
    </citation>
    <scope>PROTEIN SEQUENCE OF 60-69; 118-125; 129-138; 153-164; 166-181; 193-199 AND 216-228</scope>
    <scope>SUBCELLULAR LOCATION</scope>
    <scope>TISSUE SPECIFICITY</scope>
    <source>
        <tissue>Shell</tissue>
    </source>
</reference>
<sequence>MLAVLLFAALVATAYSQEYGPAKPDVKIIPHPKTVVHEDARHVHRQVHLVKQVPVHRTRVQTIINEVPRIIRKPKQIRKTRVFRQYYPVDVPVLRKVTVVKPVHLERKVPVPRMVVKDVPHHVVRTKKVDVPIDVPIKKIVEKKVVRYVENKIFRPRPVVQEKVRVEHVPQPFPVDQVVVKKNPRPRLIVEKKPVPVIRHIHTHKKQAVAVPRVKTVAEVVPNVVHQKVTYPVGKGGGSVQIPGGPLPVPEHYKYKGYDK</sequence>
<feature type="signal peptide" evidence="1">
    <location>
        <begin position="1"/>
        <end position="16"/>
    </location>
</feature>
<feature type="chain" id="PRO_0000413082" description="Mantle protein" evidence="1">
    <location>
        <begin position="17"/>
        <end position="260"/>
    </location>
</feature>
<feature type="sequence conflict" description="In Ref. 1; GT277821." evidence="4" ref="1">
    <original>V</original>
    <variation>F</variation>
    <location>
        <position position="47"/>
    </location>
</feature>
<feature type="sequence conflict" description="In Ref. 1; GT277755." evidence="4" ref="1">
    <original>V</original>
    <variation>I</variation>
    <location>
        <position position="67"/>
    </location>
</feature>
<feature type="sequence conflict" description="In Ref. 1; GT277755." evidence="4" ref="1">
    <original>R</original>
    <variation>K</variation>
    <location>
        <position position="84"/>
    </location>
</feature>
<feature type="sequence conflict" description="In Ref. 1; GT277755." evidence="4" ref="1">
    <original>V</original>
    <variation>D</variation>
    <location>
        <position position="99"/>
    </location>
</feature>
<feature type="sequence conflict" description="In Ref. 1; GT277755." evidence="4" ref="1">
    <original>V</original>
    <variation>D</variation>
    <location>
        <position position="103"/>
    </location>
</feature>
<feature type="sequence conflict" description="In Ref. 1; GT277755." evidence="4" ref="1">
    <original>D</original>
    <variation>Y</variation>
    <location>
        <position position="130"/>
    </location>
</feature>
<feature type="sequence conflict" description="In Ref. 1; GT283189." evidence="4" ref="1">
    <original>R</original>
    <variation>T</variation>
    <location>
        <position position="147"/>
    </location>
</feature>
<feature type="sequence conflict" description="In Ref. 1; GT283189." evidence="4" ref="1">
    <original>E</original>
    <variation>Q</variation>
    <location>
        <position position="150"/>
    </location>
</feature>
<feature type="sequence conflict" description="In Ref. 1; GT283189." evidence="4" ref="1">
    <original>R</original>
    <variation>T</variation>
    <location>
        <position position="155"/>
    </location>
</feature>
<feature type="sequence conflict" description="In Ref. 1; GT282426." evidence="4" ref="1">
    <original>R</original>
    <variation>K</variation>
    <location>
        <position position="157"/>
    </location>
</feature>
<feature type="sequence conflict" description="In Ref. 1; GT279048." evidence="4" ref="1">
    <original>V</original>
    <variation>L</variation>
    <location>
        <position position="179"/>
    </location>
</feature>
<feature type="sequence conflict" description="In Ref. 1; GT279048." evidence="4" ref="1">
    <original>RP</original>
    <variation>KT</variation>
    <location>
        <begin position="185"/>
        <end position="186"/>
    </location>
</feature>
<feature type="sequence conflict" description="In Ref. 1; GT282426." evidence="4" ref="1">
    <original>R</original>
    <variation>K</variation>
    <location>
        <position position="185"/>
    </location>
</feature>
<feature type="sequence conflict" description="In Ref. 1; GT279510/GT282426." evidence="4" ref="1">
    <original>R</original>
    <variation>K</variation>
    <location>
        <position position="199"/>
    </location>
</feature>
<feature type="sequence conflict" description="In Ref. 1; GT281217." evidence="4" ref="1">
    <original>V</original>
    <variation>S</variation>
    <location>
        <position position="214"/>
    </location>
</feature>
<comment type="subcellular location">
    <subcellularLocation>
        <location evidence="3">Secreted</location>
    </subcellularLocation>
</comment>
<comment type="tissue specificity">
    <text evidence="3">Prismatic layer of shell (at protein level). Expressed primarily in the mantle with highest level in the mantle edge and lower level in the mantle pallium.</text>
</comment>
<comment type="sequence caution" evidence="4">
    <conflict type="frameshift">
        <sequence resource="EMBL" id="GT279654"/>
    </conflict>
</comment>
<comment type="sequence caution" evidence="4">
    <conflict type="frameshift">
        <sequence resource="EMBL" id="GT279783"/>
    </conflict>
</comment>
<comment type="sequence caution" evidence="4">
    <conflict type="miscellaneous discrepancy">
        <sequence resource="EMBL" id="GT281217"/>
    </conflict>
    <text>Premature stop codon at position 215.</text>
</comment>
<comment type="sequence caution" evidence="4">
    <conflict type="miscellaneous discrepancy">
        <sequence resource="EMBL" id="GT281270"/>
    </conflict>
    <text>Premature stop codon at position 128.</text>
</comment>
<comment type="sequence caution" evidence="4">
    <conflict type="frameshift">
        <sequence resource="EMBL" id="GT281750"/>
    </conflict>
</comment>